<reference key="1">
    <citation type="journal article" date="2006" name="Proc. Natl. Acad. Sci. U.S.A.">
        <title>The partitioned Rhizobium etli genome: genetic and metabolic redundancy in seven interacting replicons.</title>
        <authorList>
            <person name="Gonzalez V."/>
            <person name="Santamaria R.I."/>
            <person name="Bustos P."/>
            <person name="Hernandez-Gonzalez I."/>
            <person name="Medrano-Soto A."/>
            <person name="Moreno-Hagelsieb G."/>
            <person name="Janga S.C."/>
            <person name="Ramirez M.A."/>
            <person name="Jimenez-Jacinto V."/>
            <person name="Collado-Vides J."/>
            <person name="Davila G."/>
        </authorList>
    </citation>
    <scope>NUCLEOTIDE SEQUENCE [LARGE SCALE GENOMIC DNA]</scope>
    <source>
        <strain>ATCC 51251 / DSM 11541 / JCM 21823 / NBRC 15573 / CFN 42</strain>
    </source>
</reference>
<proteinExistence type="inferred from homology"/>
<dbReference type="EC" id="2.7.2.8" evidence="1"/>
<dbReference type="EMBL" id="CP000133">
    <property type="protein sequence ID" value="ABC89250.1"/>
    <property type="status" value="ALT_INIT"/>
    <property type="molecule type" value="Genomic_DNA"/>
</dbReference>
<dbReference type="RefSeq" id="WP_011423809.1">
    <property type="nucleotide sequence ID" value="NC_007761.1"/>
</dbReference>
<dbReference type="SMR" id="Q2KD36"/>
<dbReference type="KEGG" id="ret:RHE_CH00428"/>
<dbReference type="eggNOG" id="COG0548">
    <property type="taxonomic scope" value="Bacteria"/>
</dbReference>
<dbReference type="HOGENOM" id="CLU_053680_0_1_5"/>
<dbReference type="OrthoDB" id="9803155at2"/>
<dbReference type="UniPathway" id="UPA00068">
    <property type="reaction ID" value="UER00107"/>
</dbReference>
<dbReference type="Proteomes" id="UP000001936">
    <property type="component" value="Chromosome"/>
</dbReference>
<dbReference type="GO" id="GO:0005737">
    <property type="term" value="C:cytoplasm"/>
    <property type="evidence" value="ECO:0007669"/>
    <property type="project" value="UniProtKB-SubCell"/>
</dbReference>
<dbReference type="GO" id="GO:0003991">
    <property type="term" value="F:acetylglutamate kinase activity"/>
    <property type="evidence" value="ECO:0007669"/>
    <property type="project" value="UniProtKB-UniRule"/>
</dbReference>
<dbReference type="GO" id="GO:0005524">
    <property type="term" value="F:ATP binding"/>
    <property type="evidence" value="ECO:0007669"/>
    <property type="project" value="UniProtKB-UniRule"/>
</dbReference>
<dbReference type="GO" id="GO:0042450">
    <property type="term" value="P:arginine biosynthetic process via ornithine"/>
    <property type="evidence" value="ECO:0007669"/>
    <property type="project" value="UniProtKB-UniRule"/>
</dbReference>
<dbReference type="GO" id="GO:0006526">
    <property type="term" value="P:L-arginine biosynthetic process"/>
    <property type="evidence" value="ECO:0007669"/>
    <property type="project" value="UniProtKB-UniPathway"/>
</dbReference>
<dbReference type="CDD" id="cd04250">
    <property type="entry name" value="AAK_NAGK-C"/>
    <property type="match status" value="1"/>
</dbReference>
<dbReference type="FunFam" id="3.40.1160.10:FF:000004">
    <property type="entry name" value="Acetylglutamate kinase"/>
    <property type="match status" value="1"/>
</dbReference>
<dbReference type="Gene3D" id="3.40.1160.10">
    <property type="entry name" value="Acetylglutamate kinase-like"/>
    <property type="match status" value="1"/>
</dbReference>
<dbReference type="HAMAP" id="MF_00082">
    <property type="entry name" value="ArgB"/>
    <property type="match status" value="1"/>
</dbReference>
<dbReference type="InterPro" id="IPR036393">
    <property type="entry name" value="AceGlu_kinase-like_sf"/>
</dbReference>
<dbReference type="InterPro" id="IPR004662">
    <property type="entry name" value="AcgluKinase_fam"/>
</dbReference>
<dbReference type="InterPro" id="IPR037528">
    <property type="entry name" value="ArgB"/>
</dbReference>
<dbReference type="InterPro" id="IPR001048">
    <property type="entry name" value="Asp/Glu/Uridylate_kinase"/>
</dbReference>
<dbReference type="InterPro" id="IPR001057">
    <property type="entry name" value="Glu/AcGlu_kinase"/>
</dbReference>
<dbReference type="InterPro" id="IPR041727">
    <property type="entry name" value="NAGK-C"/>
</dbReference>
<dbReference type="NCBIfam" id="TIGR00761">
    <property type="entry name" value="argB"/>
    <property type="match status" value="1"/>
</dbReference>
<dbReference type="PANTHER" id="PTHR23342">
    <property type="entry name" value="N-ACETYLGLUTAMATE SYNTHASE"/>
    <property type="match status" value="1"/>
</dbReference>
<dbReference type="PANTHER" id="PTHR23342:SF0">
    <property type="entry name" value="N-ACETYLGLUTAMATE SYNTHASE, MITOCHONDRIAL"/>
    <property type="match status" value="1"/>
</dbReference>
<dbReference type="Pfam" id="PF00696">
    <property type="entry name" value="AA_kinase"/>
    <property type="match status" value="1"/>
</dbReference>
<dbReference type="PIRSF" id="PIRSF000728">
    <property type="entry name" value="NAGK"/>
    <property type="match status" value="1"/>
</dbReference>
<dbReference type="PRINTS" id="PR00474">
    <property type="entry name" value="GLU5KINASE"/>
</dbReference>
<dbReference type="SUPFAM" id="SSF53633">
    <property type="entry name" value="Carbamate kinase-like"/>
    <property type="match status" value="1"/>
</dbReference>
<protein>
    <recommendedName>
        <fullName evidence="1">Acetylglutamate kinase</fullName>
        <ecNumber evidence="1">2.7.2.8</ecNumber>
    </recommendedName>
    <alternativeName>
        <fullName evidence="1">N-acetyl-L-glutamate 5-phosphotransferase</fullName>
    </alternativeName>
    <alternativeName>
        <fullName evidence="1">NAG kinase</fullName>
        <shortName evidence="1">NAGK</shortName>
    </alternativeName>
</protein>
<comment type="function">
    <text evidence="1">Catalyzes the ATP-dependent phosphorylation of N-acetyl-L-glutamate.</text>
</comment>
<comment type="catalytic activity">
    <reaction evidence="1">
        <text>N-acetyl-L-glutamate + ATP = N-acetyl-L-glutamyl 5-phosphate + ADP</text>
        <dbReference type="Rhea" id="RHEA:14629"/>
        <dbReference type="ChEBI" id="CHEBI:30616"/>
        <dbReference type="ChEBI" id="CHEBI:44337"/>
        <dbReference type="ChEBI" id="CHEBI:57936"/>
        <dbReference type="ChEBI" id="CHEBI:456216"/>
        <dbReference type="EC" id="2.7.2.8"/>
    </reaction>
</comment>
<comment type="pathway">
    <text evidence="1">Amino-acid biosynthesis; L-arginine biosynthesis; N(2)-acetyl-L-ornithine from L-glutamate: step 2/4.</text>
</comment>
<comment type="subcellular location">
    <subcellularLocation>
        <location evidence="1">Cytoplasm</location>
    </subcellularLocation>
</comment>
<comment type="similarity">
    <text evidence="1">Belongs to the acetylglutamate kinase family. ArgB subfamily.</text>
</comment>
<comment type="sequence caution" evidence="2">
    <conflict type="erroneous initiation">
        <sequence resource="EMBL-CDS" id="ABC89250"/>
    </conflict>
</comment>
<accession>Q2KD36</accession>
<sequence length="295" mass="31174">MNESESEIQARLLAQALPFMQRYENKTIVVKYGGHAMGNPELGKAFASDIALLKQSGVNPIVVHGGGPQIGAMLTKMGIESKFEGGLRVTDQKTVEIVEMVLAGSINKEIVALINQTGEWAIGLCGKDGNMVFAEKARKTIKDPDSNIERVLDLGFVGEVVEVDRTLLDLLARSEMIPVIAPVAPGRDGATYNINADTFAGAIAGALNATRLLFLTDVPGVLDKKGQLIKELSVAEAHALIADGTISGGMIPKVETCIDAIKAGVQGVVILNGKTAHSVLLEIFTEHGIGTLIVP</sequence>
<gene>
    <name evidence="1" type="primary">argB</name>
    <name type="ordered locus">RHE_CH00428</name>
</gene>
<feature type="chain" id="PRO_0000264742" description="Acetylglutamate kinase">
    <location>
        <begin position="1"/>
        <end position="295"/>
    </location>
</feature>
<feature type="binding site" evidence="1">
    <location>
        <begin position="66"/>
        <end position="67"/>
    </location>
    <ligand>
        <name>substrate</name>
    </ligand>
</feature>
<feature type="binding site" evidence="1">
    <location>
        <position position="88"/>
    </location>
    <ligand>
        <name>substrate</name>
    </ligand>
</feature>
<feature type="binding site" evidence="1">
    <location>
        <position position="193"/>
    </location>
    <ligand>
        <name>substrate</name>
    </ligand>
</feature>
<feature type="site" description="Transition state stabilizer" evidence="1">
    <location>
        <position position="31"/>
    </location>
</feature>
<feature type="site" description="Transition state stabilizer" evidence="1">
    <location>
        <position position="253"/>
    </location>
</feature>
<name>ARGB_RHIEC</name>
<evidence type="ECO:0000255" key="1">
    <source>
        <dbReference type="HAMAP-Rule" id="MF_00082"/>
    </source>
</evidence>
<evidence type="ECO:0000305" key="2"/>
<keyword id="KW-0028">Amino-acid biosynthesis</keyword>
<keyword id="KW-0055">Arginine biosynthesis</keyword>
<keyword id="KW-0067">ATP-binding</keyword>
<keyword id="KW-0963">Cytoplasm</keyword>
<keyword id="KW-0418">Kinase</keyword>
<keyword id="KW-0547">Nucleotide-binding</keyword>
<keyword id="KW-1185">Reference proteome</keyword>
<keyword id="KW-0808">Transferase</keyword>
<organism>
    <name type="scientific">Rhizobium etli (strain ATCC 51251 / DSM 11541 / JCM 21823 / NBRC 15573 / CFN 42)</name>
    <dbReference type="NCBI Taxonomy" id="347834"/>
    <lineage>
        <taxon>Bacteria</taxon>
        <taxon>Pseudomonadati</taxon>
        <taxon>Pseudomonadota</taxon>
        <taxon>Alphaproteobacteria</taxon>
        <taxon>Hyphomicrobiales</taxon>
        <taxon>Rhizobiaceae</taxon>
        <taxon>Rhizobium/Agrobacterium group</taxon>
        <taxon>Rhizobium</taxon>
    </lineage>
</organism>